<feature type="signal peptide" evidence="2">
    <location>
        <begin position="1"/>
        <end position="18"/>
    </location>
</feature>
<feature type="chain" id="PRO_0000394337" description="Probable pectin lyase A">
    <location>
        <begin position="19"/>
        <end position="378"/>
    </location>
</feature>
<feature type="active site" evidence="2">
    <location>
        <position position="254"/>
    </location>
</feature>
<feature type="disulfide bond" evidence="1">
    <location>
        <begin position="81"/>
        <end position="100"/>
    </location>
</feature>
<feature type="disulfide bond" evidence="1">
    <location>
        <begin position="90"/>
        <end position="224"/>
    </location>
</feature>
<feature type="disulfide bond" evidence="1">
    <location>
        <begin position="321"/>
        <end position="329"/>
    </location>
</feature>
<accession>A1CFS2</accession>
<protein>
    <recommendedName>
        <fullName>Probable pectin lyase A</fullName>
        <shortName>PLA</shortName>
        <ecNumber>4.2.2.10</ecNumber>
    </recommendedName>
</protein>
<gene>
    <name type="primary">pelA</name>
    <name type="ORF">ACLA_094210</name>
</gene>
<comment type="function">
    <text evidence="1">Pectinolytic enzymes consist of four classes of enzymes: pectin lyase, polygalacturonase, pectin methylesterase and rhamnogalacturonase. Among pectinolytic enzymes, pectin lyase is the most important in depolymerization of pectin, since it cleaves internal glycosidic bonds of highly methylated pectins (By similarity).</text>
</comment>
<comment type="catalytic activity">
    <reaction>
        <text>Eliminative cleavage of (1-&gt;4)-alpha-D-galacturonan methyl ester to give oligosaccharides with 4-deoxy-6-O-methyl-alpha-D-galact-4-enuronosyl groups at their non-reducing ends.</text>
        <dbReference type="EC" id="4.2.2.10"/>
    </reaction>
</comment>
<comment type="subcellular location">
    <subcellularLocation>
        <location evidence="1">Secreted</location>
    </subcellularLocation>
</comment>
<comment type="similarity">
    <text evidence="3">Belongs to the polysaccharide lyase 1 family.</text>
</comment>
<dbReference type="EC" id="4.2.2.10"/>
<dbReference type="EMBL" id="DS027052">
    <property type="protein sequence ID" value="EAW11721.1"/>
    <property type="molecule type" value="Genomic_DNA"/>
</dbReference>
<dbReference type="RefSeq" id="XP_001273147.1">
    <property type="nucleotide sequence ID" value="XM_001273146.1"/>
</dbReference>
<dbReference type="SMR" id="A1CFS2"/>
<dbReference type="STRING" id="344612.A1CFS2"/>
<dbReference type="EnsemblFungi" id="EAW11721">
    <property type="protein sequence ID" value="EAW11721"/>
    <property type="gene ID" value="ACLA_094210"/>
</dbReference>
<dbReference type="GeneID" id="4704779"/>
<dbReference type="KEGG" id="act:ACLA_094210"/>
<dbReference type="VEuPathDB" id="FungiDB:ACLA_094210"/>
<dbReference type="eggNOG" id="ENOG502QXM6">
    <property type="taxonomic scope" value="Eukaryota"/>
</dbReference>
<dbReference type="HOGENOM" id="CLU_021980_0_1_1"/>
<dbReference type="OMA" id="YLGHVCQ"/>
<dbReference type="OrthoDB" id="1637350at2759"/>
<dbReference type="Proteomes" id="UP000006701">
    <property type="component" value="Unassembled WGS sequence"/>
</dbReference>
<dbReference type="GO" id="GO:0005576">
    <property type="term" value="C:extracellular region"/>
    <property type="evidence" value="ECO:0007669"/>
    <property type="project" value="UniProtKB-SubCell"/>
</dbReference>
<dbReference type="GO" id="GO:0030570">
    <property type="term" value="F:pectate lyase activity"/>
    <property type="evidence" value="ECO:0007669"/>
    <property type="project" value="InterPro"/>
</dbReference>
<dbReference type="GO" id="GO:0047490">
    <property type="term" value="F:pectin lyase activity"/>
    <property type="evidence" value="ECO:0000250"/>
    <property type="project" value="UniProtKB"/>
</dbReference>
<dbReference type="GO" id="GO:0071555">
    <property type="term" value="P:cell wall organization"/>
    <property type="evidence" value="ECO:0007669"/>
    <property type="project" value="UniProtKB-KW"/>
</dbReference>
<dbReference type="GO" id="GO:0045490">
    <property type="term" value="P:pectin catabolic process"/>
    <property type="evidence" value="ECO:0000250"/>
    <property type="project" value="UniProtKB"/>
</dbReference>
<dbReference type="FunFam" id="2.160.20.10:FF:000003">
    <property type="entry name" value="Pectin lyase F"/>
    <property type="match status" value="1"/>
</dbReference>
<dbReference type="Gene3D" id="2.160.20.10">
    <property type="entry name" value="Single-stranded right-handed beta-helix, Pectin lyase-like"/>
    <property type="match status" value="1"/>
</dbReference>
<dbReference type="InterPro" id="IPR002022">
    <property type="entry name" value="Pec_lyase"/>
</dbReference>
<dbReference type="InterPro" id="IPR012334">
    <property type="entry name" value="Pectin_lyas_fold"/>
</dbReference>
<dbReference type="InterPro" id="IPR011050">
    <property type="entry name" value="Pectin_lyase_fold/virulence"/>
</dbReference>
<dbReference type="InterPro" id="IPR045032">
    <property type="entry name" value="PEL"/>
</dbReference>
<dbReference type="PANTHER" id="PTHR31683">
    <property type="entry name" value="PECTATE LYASE 18-RELATED"/>
    <property type="match status" value="1"/>
</dbReference>
<dbReference type="PANTHER" id="PTHR31683:SF16">
    <property type="entry name" value="PECTIN LYASE A-RELATED"/>
    <property type="match status" value="1"/>
</dbReference>
<dbReference type="Pfam" id="PF00544">
    <property type="entry name" value="Pectate_lyase_4"/>
    <property type="match status" value="1"/>
</dbReference>
<dbReference type="SMART" id="SM00656">
    <property type="entry name" value="Amb_all"/>
    <property type="match status" value="1"/>
</dbReference>
<dbReference type="SUPFAM" id="SSF51126">
    <property type="entry name" value="Pectin lyase-like"/>
    <property type="match status" value="1"/>
</dbReference>
<keyword id="KW-0119">Carbohydrate metabolism</keyword>
<keyword id="KW-0961">Cell wall biogenesis/degradation</keyword>
<keyword id="KW-1015">Disulfide bond</keyword>
<keyword id="KW-0456">Lyase</keyword>
<keyword id="KW-0624">Polysaccharide degradation</keyword>
<keyword id="KW-1185">Reference proteome</keyword>
<keyword id="KW-0964">Secreted</keyword>
<keyword id="KW-0732">Signal</keyword>
<reference key="1">
    <citation type="journal article" date="2008" name="PLoS Genet.">
        <title>Genomic islands in the pathogenic filamentous fungus Aspergillus fumigatus.</title>
        <authorList>
            <person name="Fedorova N.D."/>
            <person name="Khaldi N."/>
            <person name="Joardar V.S."/>
            <person name="Maiti R."/>
            <person name="Amedeo P."/>
            <person name="Anderson M.J."/>
            <person name="Crabtree J."/>
            <person name="Silva J.C."/>
            <person name="Badger J.H."/>
            <person name="Albarraq A."/>
            <person name="Angiuoli S."/>
            <person name="Bussey H."/>
            <person name="Bowyer P."/>
            <person name="Cotty P.J."/>
            <person name="Dyer P.S."/>
            <person name="Egan A."/>
            <person name="Galens K."/>
            <person name="Fraser-Liggett C.M."/>
            <person name="Haas B.J."/>
            <person name="Inman J.M."/>
            <person name="Kent R."/>
            <person name="Lemieux S."/>
            <person name="Malavazi I."/>
            <person name="Orvis J."/>
            <person name="Roemer T."/>
            <person name="Ronning C.M."/>
            <person name="Sundaram J.P."/>
            <person name="Sutton G."/>
            <person name="Turner G."/>
            <person name="Venter J.C."/>
            <person name="White O.R."/>
            <person name="Whitty B.R."/>
            <person name="Youngman P."/>
            <person name="Wolfe K.H."/>
            <person name="Goldman G.H."/>
            <person name="Wortman J.R."/>
            <person name="Jiang B."/>
            <person name="Denning D.W."/>
            <person name="Nierman W.C."/>
        </authorList>
    </citation>
    <scope>NUCLEOTIDE SEQUENCE [LARGE SCALE GENOMIC DNA]</scope>
    <source>
        <strain>ATCC 1007 / CBS 513.65 / DSM 816 / NCTC 3887 / NRRL 1 / QM 1276 / 107</strain>
    </source>
</reference>
<proteinExistence type="inferred from homology"/>
<organism>
    <name type="scientific">Aspergillus clavatus (strain ATCC 1007 / CBS 513.65 / DSM 816 / NCTC 3887 / NRRL 1 / QM 1276 / 107)</name>
    <dbReference type="NCBI Taxonomy" id="344612"/>
    <lineage>
        <taxon>Eukaryota</taxon>
        <taxon>Fungi</taxon>
        <taxon>Dikarya</taxon>
        <taxon>Ascomycota</taxon>
        <taxon>Pezizomycotina</taxon>
        <taxon>Eurotiomycetes</taxon>
        <taxon>Eurotiomycetidae</taxon>
        <taxon>Eurotiales</taxon>
        <taxon>Aspergillaceae</taxon>
        <taxon>Aspergillus</taxon>
        <taxon>Aspergillus subgen. Fumigati</taxon>
    </lineage>
</organism>
<evidence type="ECO:0000250" key="1"/>
<evidence type="ECO:0000255" key="2"/>
<evidence type="ECO:0000305" key="3"/>
<name>PELA_ASPCL</name>
<sequence>MKYASFLALVGFITSTSAIGVSGAAEGFAKGVTGGGSATPVYPSTTAELVSYLTDSQPRVIVLTKTFDFTNTEGSTTATGCAPWGTAPGCQLAINQNDWCKNYQSSAPSVSVTYDNAGVLGMTVASDKTLLGSGSSGVIKGKGLRVVSGAKNIIIQNVAITDINPKYVWGGDAITIDNADMVWIDHVTTARIGRQHLVLGTSASNRVTISNSYFNGVSSYSATCDGYHYWGIYLTGSNDLVTMKGNYIHHFSGRSPKIQGNTLLHAVNNYWYDSTGHAFEIGSGGYVLAEGNVFQNIKTIVEPPVGGQLFTSPNSNTNQACSAYLGHVCQVNGFGSSGPFSQADTGLLSKFSGKNVASASAYTVAQSRVPSSAGQGKL</sequence>